<reference key="1">
    <citation type="journal article" date="2004" name="Genome Res.">
        <title>Genome sequence of Haloarcula marismortui: a halophilic archaeon from the Dead Sea.</title>
        <authorList>
            <person name="Baliga N.S."/>
            <person name="Bonneau R."/>
            <person name="Facciotti M.T."/>
            <person name="Pan M."/>
            <person name="Glusman G."/>
            <person name="Deutsch E.W."/>
            <person name="Shannon P."/>
            <person name="Chiu Y."/>
            <person name="Weng R.S."/>
            <person name="Gan R.R."/>
            <person name="Hung P."/>
            <person name="Date S.V."/>
            <person name="Marcotte E."/>
            <person name="Hood L."/>
            <person name="Ng W.V."/>
        </authorList>
    </citation>
    <scope>NUCLEOTIDE SEQUENCE [LARGE SCALE GENOMIC DNA]</scope>
    <source>
        <strain>ATCC 43049 / DSM 3752 / JCM 8966 / VKM B-1809</strain>
    </source>
</reference>
<reference key="2">
    <citation type="journal article" date="2011" name="Int. J. Syst. Evol. Microbiol.">
        <title>A multilocus sequence analysis approach to the phylogeny and taxonomy of the Halobacteriales.</title>
        <authorList>
            <person name="Papke R.T."/>
            <person name="White E."/>
            <person name="Reddy P."/>
            <person name="Weigel G."/>
            <person name="Kamekura M."/>
            <person name="Minegishi H."/>
            <person name="Usami R."/>
            <person name="Ventosa A."/>
        </authorList>
    </citation>
    <scope>NUCLEOTIDE SEQUENCE [GENOMIC DNA] OF 211-379</scope>
    <source>
        <strain>ATCC 43049 / DSM 3752 / JCM 8966 / VKM B-1809</strain>
    </source>
</reference>
<sequence>MGRRKKIVQECETLMDDPEHIRNIAIAAHVDHGKTTLTDNLLAGAGMISDDTAGEQLAMDTEEDEQERGITIDAANVSMTHEYEDQNHLINLIDTPGHVDFGGDVTRAMRAVDGALVVVDAVEGAMPQTETVLRQALREGVKPTLFINKVDRLISELQEGPEEMQKRLLAVIQDVNDLIRGMTEEMDDIEDWTVSVEEGTVGFGSALYKWGVSMPSMQRTGMDFGEIMELERADNRQELHERTPLSDVVLDMVCEHFPNPVDAQPMRVPRIWRGDAESQLADDMRLVNEDGEVVLMVTDIGVDPHAGEIAAGRVFSGTLEKGQELYVSGTAGKNRIQSVGIYMGGEREEVDRVPAGNIAAVTGLKDAIAGSTVSSEEMTPFESIEHISEPVITKSVEAQNMDDLPKLIETLQQVAKEDPTIQVEINEDTGEHLISGQGELHLEVIGQRIERNQGIPINTGEPIVVYREAPQEDSREVEGRSPNNHNRFYISIEPLGEDIVETIKMGEASMDMPELERREALQEAGMDKDDSQNIEHIHGTNILLDETKGIQHLNETMELVIEGLEEALDDGPLASEPVQGSLIRLHDARLHEDAIHRGPAQVIPAVREAVHNSLIDASIKLLEPIQQVRIDVPNDHMGAASGEIQGRRGRVDDMYQEGDLMVVEGVAPVDEMIGFSSDIRSATEGRASWNTENAGFQVLADNLQPDKISEIRERKGMKQELNPAIDYF</sequence>
<gene>
    <name evidence="1" type="primary">fusA</name>
    <name evidence="2" type="synonym">ef-2</name>
    <name type="ordered locus">rrnAC2413</name>
</gene>
<protein>
    <recommendedName>
        <fullName evidence="1">Elongation factor 2</fullName>
        <shortName evidence="1">EF-2</shortName>
    </recommendedName>
</protein>
<accession>Q5UZS7</accession>
<accession>E3VNY5</accession>
<dbReference type="EMBL" id="AY596297">
    <property type="protein sequence ID" value="AAV47226.1"/>
    <property type="molecule type" value="Genomic_DNA"/>
</dbReference>
<dbReference type="EMBL" id="HQ149393">
    <property type="protein sequence ID" value="ADP09119.1"/>
    <property type="molecule type" value="Genomic_DNA"/>
</dbReference>
<dbReference type="RefSeq" id="WP_004959082.1">
    <property type="nucleotide sequence ID" value="NZ_CP039138.1"/>
</dbReference>
<dbReference type="SMR" id="Q5UZS7"/>
<dbReference type="STRING" id="272569.rrnAC2413"/>
<dbReference type="PaxDb" id="272569-rrnAC2413"/>
<dbReference type="EnsemblBacteria" id="AAV47226">
    <property type="protein sequence ID" value="AAV47226"/>
    <property type="gene ID" value="rrnAC2413"/>
</dbReference>
<dbReference type="KEGG" id="hma:rrnAC2413"/>
<dbReference type="PATRIC" id="fig|272569.17.peg.3027"/>
<dbReference type="eggNOG" id="arCOG01559">
    <property type="taxonomic scope" value="Archaea"/>
</dbReference>
<dbReference type="HOGENOM" id="CLU_002794_11_1_2"/>
<dbReference type="Proteomes" id="UP000001169">
    <property type="component" value="Chromosome I"/>
</dbReference>
<dbReference type="GO" id="GO:0005829">
    <property type="term" value="C:cytosol"/>
    <property type="evidence" value="ECO:0007669"/>
    <property type="project" value="TreeGrafter"/>
</dbReference>
<dbReference type="GO" id="GO:1990904">
    <property type="term" value="C:ribonucleoprotein complex"/>
    <property type="evidence" value="ECO:0007669"/>
    <property type="project" value="TreeGrafter"/>
</dbReference>
<dbReference type="GO" id="GO:0005525">
    <property type="term" value="F:GTP binding"/>
    <property type="evidence" value="ECO:0007669"/>
    <property type="project" value="UniProtKB-UniRule"/>
</dbReference>
<dbReference type="GO" id="GO:0003924">
    <property type="term" value="F:GTPase activity"/>
    <property type="evidence" value="ECO:0007669"/>
    <property type="project" value="InterPro"/>
</dbReference>
<dbReference type="GO" id="GO:0003746">
    <property type="term" value="F:translation elongation factor activity"/>
    <property type="evidence" value="ECO:0007669"/>
    <property type="project" value="UniProtKB-UniRule"/>
</dbReference>
<dbReference type="CDD" id="cd01681">
    <property type="entry name" value="aeEF2_snRNP_like_IV"/>
    <property type="match status" value="1"/>
</dbReference>
<dbReference type="CDD" id="cd01885">
    <property type="entry name" value="EF2"/>
    <property type="match status" value="1"/>
</dbReference>
<dbReference type="CDD" id="cd16268">
    <property type="entry name" value="EF2_II"/>
    <property type="match status" value="1"/>
</dbReference>
<dbReference type="CDD" id="cd16261">
    <property type="entry name" value="EF2_snRNP_III"/>
    <property type="match status" value="1"/>
</dbReference>
<dbReference type="CDD" id="cd01514">
    <property type="entry name" value="Elongation_Factor_C"/>
    <property type="match status" value="1"/>
</dbReference>
<dbReference type="FunFam" id="2.40.30.10:FF:000110">
    <property type="entry name" value="Elongation factor 2"/>
    <property type="match status" value="1"/>
</dbReference>
<dbReference type="FunFam" id="3.30.70.240:FF:000010">
    <property type="entry name" value="Elongation factor 2"/>
    <property type="match status" value="1"/>
</dbReference>
<dbReference type="FunFam" id="3.40.50.300:FF:000684">
    <property type="entry name" value="Elongation factor 2"/>
    <property type="match status" value="1"/>
</dbReference>
<dbReference type="FunFam" id="3.30.70.870:FF:000002">
    <property type="entry name" value="Translation elongation factor 2"/>
    <property type="match status" value="1"/>
</dbReference>
<dbReference type="Gene3D" id="3.30.230.10">
    <property type="match status" value="1"/>
</dbReference>
<dbReference type="Gene3D" id="3.30.70.240">
    <property type="match status" value="1"/>
</dbReference>
<dbReference type="Gene3D" id="3.30.70.870">
    <property type="entry name" value="Elongation Factor G (Translational Gtpase), domain 3"/>
    <property type="match status" value="1"/>
</dbReference>
<dbReference type="Gene3D" id="3.40.50.300">
    <property type="entry name" value="P-loop containing nucleotide triphosphate hydrolases"/>
    <property type="match status" value="1"/>
</dbReference>
<dbReference type="Gene3D" id="2.40.30.10">
    <property type="entry name" value="Translation factors"/>
    <property type="match status" value="1"/>
</dbReference>
<dbReference type="HAMAP" id="MF_00054_A">
    <property type="entry name" value="EF_G_EF_2_A"/>
    <property type="match status" value="1"/>
</dbReference>
<dbReference type="InterPro" id="IPR041095">
    <property type="entry name" value="EFG_II"/>
</dbReference>
<dbReference type="InterPro" id="IPR035647">
    <property type="entry name" value="EFG_III/V"/>
</dbReference>
<dbReference type="InterPro" id="IPR000640">
    <property type="entry name" value="EFG_V-like"/>
</dbReference>
<dbReference type="InterPro" id="IPR004161">
    <property type="entry name" value="EFTu-like_2"/>
</dbReference>
<dbReference type="InterPro" id="IPR031157">
    <property type="entry name" value="G_TR_CS"/>
</dbReference>
<dbReference type="InterPro" id="IPR027417">
    <property type="entry name" value="P-loop_NTPase"/>
</dbReference>
<dbReference type="InterPro" id="IPR020568">
    <property type="entry name" value="Ribosomal_Su5_D2-typ_SF"/>
</dbReference>
<dbReference type="InterPro" id="IPR014721">
    <property type="entry name" value="Ribsml_uS5_D2-typ_fold_subgr"/>
</dbReference>
<dbReference type="InterPro" id="IPR005225">
    <property type="entry name" value="Small_GTP-bd"/>
</dbReference>
<dbReference type="InterPro" id="IPR000795">
    <property type="entry name" value="T_Tr_GTP-bd_dom"/>
</dbReference>
<dbReference type="InterPro" id="IPR009000">
    <property type="entry name" value="Transl_B-barrel_sf"/>
</dbReference>
<dbReference type="InterPro" id="IPR004543">
    <property type="entry name" value="Transl_elong_EFG/EF2_arc"/>
</dbReference>
<dbReference type="InterPro" id="IPR005517">
    <property type="entry name" value="Transl_elong_EFG/EF2_IV"/>
</dbReference>
<dbReference type="NCBIfam" id="TIGR00490">
    <property type="entry name" value="aEF-2"/>
    <property type="match status" value="1"/>
</dbReference>
<dbReference type="NCBIfam" id="TIGR00231">
    <property type="entry name" value="small_GTP"/>
    <property type="match status" value="1"/>
</dbReference>
<dbReference type="PANTHER" id="PTHR42908:SF3">
    <property type="entry name" value="ELONGATION FACTOR-LIKE GTPASE 1"/>
    <property type="match status" value="1"/>
</dbReference>
<dbReference type="PANTHER" id="PTHR42908">
    <property type="entry name" value="TRANSLATION ELONGATION FACTOR-RELATED"/>
    <property type="match status" value="1"/>
</dbReference>
<dbReference type="Pfam" id="PF00679">
    <property type="entry name" value="EFG_C"/>
    <property type="match status" value="1"/>
</dbReference>
<dbReference type="Pfam" id="PF14492">
    <property type="entry name" value="EFG_III"/>
    <property type="match status" value="1"/>
</dbReference>
<dbReference type="Pfam" id="PF03764">
    <property type="entry name" value="EFG_IV"/>
    <property type="match status" value="1"/>
</dbReference>
<dbReference type="Pfam" id="PF00009">
    <property type="entry name" value="GTP_EFTU"/>
    <property type="match status" value="1"/>
</dbReference>
<dbReference type="Pfam" id="PF03144">
    <property type="entry name" value="GTP_EFTU_D2"/>
    <property type="match status" value="1"/>
</dbReference>
<dbReference type="PRINTS" id="PR00315">
    <property type="entry name" value="ELONGATNFCT"/>
</dbReference>
<dbReference type="SMART" id="SM00838">
    <property type="entry name" value="EFG_C"/>
    <property type="match status" value="1"/>
</dbReference>
<dbReference type="SMART" id="SM00889">
    <property type="entry name" value="EFG_IV"/>
    <property type="match status" value="1"/>
</dbReference>
<dbReference type="SUPFAM" id="SSF54980">
    <property type="entry name" value="EF-G C-terminal domain-like"/>
    <property type="match status" value="2"/>
</dbReference>
<dbReference type="SUPFAM" id="SSF52540">
    <property type="entry name" value="P-loop containing nucleoside triphosphate hydrolases"/>
    <property type="match status" value="1"/>
</dbReference>
<dbReference type="SUPFAM" id="SSF54211">
    <property type="entry name" value="Ribosomal protein S5 domain 2-like"/>
    <property type="match status" value="1"/>
</dbReference>
<dbReference type="SUPFAM" id="SSF50447">
    <property type="entry name" value="Translation proteins"/>
    <property type="match status" value="1"/>
</dbReference>
<dbReference type="PROSITE" id="PS00301">
    <property type="entry name" value="G_TR_1"/>
    <property type="match status" value="1"/>
</dbReference>
<dbReference type="PROSITE" id="PS51722">
    <property type="entry name" value="G_TR_2"/>
    <property type="match status" value="1"/>
</dbReference>
<keyword id="KW-0963">Cytoplasm</keyword>
<keyword id="KW-0251">Elongation factor</keyword>
<keyword id="KW-0342">GTP-binding</keyword>
<keyword id="KW-0547">Nucleotide-binding</keyword>
<keyword id="KW-0648">Protein biosynthesis</keyword>
<keyword id="KW-1185">Reference proteome</keyword>
<proteinExistence type="inferred from homology"/>
<name>EF2_HALMA</name>
<comment type="function">
    <text evidence="1">Catalyzes the GTP-dependent ribosomal translocation step during translation elongation. During this step, the ribosome changes from the pre-translocational (PRE) to the post-translocational (POST) state as the newly formed A-site-bound peptidyl-tRNA and P-site-bound deacylated tRNA move to the P and E sites, respectively. Catalyzes the coordinated movement of the two tRNA molecules, the mRNA and conformational changes in the ribosome.</text>
</comment>
<comment type="subcellular location">
    <subcellularLocation>
        <location evidence="1">Cytoplasm</location>
    </subcellularLocation>
</comment>
<comment type="similarity">
    <text evidence="1">Belongs to the TRAFAC class translation factor GTPase superfamily. Classic translation factor GTPase family. EF-G/EF-2 subfamily.</text>
</comment>
<feature type="chain" id="PRO_0000091028" description="Elongation factor 2">
    <location>
        <begin position="1"/>
        <end position="728"/>
    </location>
</feature>
<feature type="domain" description="tr-type G">
    <location>
        <begin position="19"/>
        <end position="261"/>
    </location>
</feature>
<feature type="binding site" evidence="1">
    <location>
        <begin position="28"/>
        <end position="35"/>
    </location>
    <ligand>
        <name>GTP</name>
        <dbReference type="ChEBI" id="CHEBI:37565"/>
    </ligand>
</feature>
<feature type="binding site" evidence="1">
    <location>
        <begin position="94"/>
        <end position="98"/>
    </location>
    <ligand>
        <name>GTP</name>
        <dbReference type="ChEBI" id="CHEBI:37565"/>
    </ligand>
</feature>
<feature type="binding site" evidence="1">
    <location>
        <begin position="148"/>
        <end position="151"/>
    </location>
    <ligand>
        <name>GTP</name>
        <dbReference type="ChEBI" id="CHEBI:37565"/>
    </ligand>
</feature>
<feature type="modified residue" description="Diphthamide" evidence="1">
    <location>
        <position position="596"/>
    </location>
</feature>
<feature type="sequence conflict" description="In Ref. 2; ADP09119." evidence="3" ref="2">
    <original>A</original>
    <variation>N</variation>
    <location>
        <position position="233"/>
    </location>
</feature>
<evidence type="ECO:0000255" key="1">
    <source>
        <dbReference type="HAMAP-Rule" id="MF_00054"/>
    </source>
</evidence>
<evidence type="ECO:0000303" key="2">
    <source>
    </source>
</evidence>
<evidence type="ECO:0000305" key="3"/>
<organism>
    <name type="scientific">Haloarcula marismortui (strain ATCC 43049 / DSM 3752 / JCM 8966 / VKM B-1809)</name>
    <name type="common">Halobacterium marismortui</name>
    <dbReference type="NCBI Taxonomy" id="272569"/>
    <lineage>
        <taxon>Archaea</taxon>
        <taxon>Methanobacteriati</taxon>
        <taxon>Methanobacteriota</taxon>
        <taxon>Stenosarchaea group</taxon>
        <taxon>Halobacteria</taxon>
        <taxon>Halobacteriales</taxon>
        <taxon>Haloarculaceae</taxon>
        <taxon>Haloarcula</taxon>
    </lineage>
</organism>